<protein>
    <recommendedName>
        <fullName>Cytochrome b</fullName>
    </recommendedName>
    <alternativeName>
        <fullName>Complex III subunit 3</fullName>
    </alternativeName>
    <alternativeName>
        <fullName>Complex III subunit III</fullName>
    </alternativeName>
    <alternativeName>
        <fullName>Cytochrome b-c1 complex subunit 3</fullName>
    </alternativeName>
    <alternativeName>
        <fullName>Ubiquinol-cytochrome-c reductase complex cytochrome b subunit</fullName>
    </alternativeName>
</protein>
<dbReference type="EMBL" id="AF084066">
    <property type="protein sequence ID" value="AAD54443.1"/>
    <property type="molecule type" value="Genomic_DNA"/>
</dbReference>
<dbReference type="SMR" id="Q9TDL9"/>
<dbReference type="GO" id="GO:0005743">
    <property type="term" value="C:mitochondrial inner membrane"/>
    <property type="evidence" value="ECO:0007669"/>
    <property type="project" value="UniProtKB-SubCell"/>
</dbReference>
<dbReference type="GO" id="GO:0045275">
    <property type="term" value="C:respiratory chain complex III"/>
    <property type="evidence" value="ECO:0007669"/>
    <property type="project" value="InterPro"/>
</dbReference>
<dbReference type="GO" id="GO:0046872">
    <property type="term" value="F:metal ion binding"/>
    <property type="evidence" value="ECO:0007669"/>
    <property type="project" value="UniProtKB-KW"/>
</dbReference>
<dbReference type="GO" id="GO:0008121">
    <property type="term" value="F:ubiquinol-cytochrome-c reductase activity"/>
    <property type="evidence" value="ECO:0007669"/>
    <property type="project" value="InterPro"/>
</dbReference>
<dbReference type="GO" id="GO:0006122">
    <property type="term" value="P:mitochondrial electron transport, ubiquinol to cytochrome c"/>
    <property type="evidence" value="ECO:0007669"/>
    <property type="project" value="TreeGrafter"/>
</dbReference>
<dbReference type="CDD" id="cd00290">
    <property type="entry name" value="cytochrome_b_C"/>
    <property type="match status" value="1"/>
</dbReference>
<dbReference type="CDD" id="cd00284">
    <property type="entry name" value="Cytochrome_b_N"/>
    <property type="match status" value="1"/>
</dbReference>
<dbReference type="FunFam" id="1.20.810.10:FF:000002">
    <property type="entry name" value="Cytochrome b"/>
    <property type="match status" value="1"/>
</dbReference>
<dbReference type="Gene3D" id="1.20.810.10">
    <property type="entry name" value="Cytochrome Bc1 Complex, Chain C"/>
    <property type="match status" value="1"/>
</dbReference>
<dbReference type="InterPro" id="IPR005798">
    <property type="entry name" value="Cyt_b/b6_C"/>
</dbReference>
<dbReference type="InterPro" id="IPR036150">
    <property type="entry name" value="Cyt_b/b6_C_sf"/>
</dbReference>
<dbReference type="InterPro" id="IPR005797">
    <property type="entry name" value="Cyt_b/b6_N"/>
</dbReference>
<dbReference type="InterPro" id="IPR027387">
    <property type="entry name" value="Cytb/b6-like_sf"/>
</dbReference>
<dbReference type="InterPro" id="IPR030689">
    <property type="entry name" value="Cytochrome_b"/>
</dbReference>
<dbReference type="InterPro" id="IPR048260">
    <property type="entry name" value="Cytochrome_b_C_euk/bac"/>
</dbReference>
<dbReference type="InterPro" id="IPR048259">
    <property type="entry name" value="Cytochrome_b_N_euk/bac"/>
</dbReference>
<dbReference type="InterPro" id="IPR016174">
    <property type="entry name" value="Di-haem_cyt_TM"/>
</dbReference>
<dbReference type="PANTHER" id="PTHR19271">
    <property type="entry name" value="CYTOCHROME B"/>
    <property type="match status" value="1"/>
</dbReference>
<dbReference type="PANTHER" id="PTHR19271:SF16">
    <property type="entry name" value="CYTOCHROME B"/>
    <property type="match status" value="1"/>
</dbReference>
<dbReference type="Pfam" id="PF00032">
    <property type="entry name" value="Cytochrom_B_C"/>
    <property type="match status" value="1"/>
</dbReference>
<dbReference type="Pfam" id="PF00033">
    <property type="entry name" value="Cytochrome_B"/>
    <property type="match status" value="1"/>
</dbReference>
<dbReference type="PIRSF" id="PIRSF038885">
    <property type="entry name" value="COB"/>
    <property type="match status" value="1"/>
</dbReference>
<dbReference type="SUPFAM" id="SSF81648">
    <property type="entry name" value="a domain/subunit of cytochrome bc1 complex (Ubiquinol-cytochrome c reductase)"/>
    <property type="match status" value="1"/>
</dbReference>
<dbReference type="SUPFAM" id="SSF81342">
    <property type="entry name" value="Transmembrane di-heme cytochromes"/>
    <property type="match status" value="1"/>
</dbReference>
<dbReference type="PROSITE" id="PS51003">
    <property type="entry name" value="CYTB_CTER"/>
    <property type="match status" value="1"/>
</dbReference>
<dbReference type="PROSITE" id="PS51002">
    <property type="entry name" value="CYTB_NTER"/>
    <property type="match status" value="1"/>
</dbReference>
<reference key="1">
    <citation type="journal article" date="1999" name="Mar. Mamm. Sci.">
        <title>Phylogenetic relationships among the delphinid cetaceans based on full cytochrome b sequences.</title>
        <authorList>
            <person name="LeDuc R.G."/>
            <person name="Perrin W.F."/>
            <person name="Dizon A.E."/>
        </authorList>
    </citation>
    <scope>NUCLEOTIDE SEQUENCE [GENOMIC DNA]</scope>
</reference>
<name>CYB_SAGOS</name>
<gene>
    <name type="primary">MT-CYB</name>
    <name type="synonym">COB</name>
    <name type="synonym">CYTB</name>
    <name type="synonym">MTCYB</name>
</gene>
<geneLocation type="mitochondrion"/>
<accession>Q9TDL9</accession>
<organism>
    <name type="scientific">Sagmatias obscurus</name>
    <name type="common">Dusky dolphin</name>
    <name type="synonym">Lagenorhynchus obscurus</name>
    <dbReference type="NCBI Taxonomy" id="3371156"/>
    <lineage>
        <taxon>Eukaryota</taxon>
        <taxon>Metazoa</taxon>
        <taxon>Chordata</taxon>
        <taxon>Craniata</taxon>
        <taxon>Vertebrata</taxon>
        <taxon>Euteleostomi</taxon>
        <taxon>Mammalia</taxon>
        <taxon>Eutheria</taxon>
        <taxon>Laurasiatheria</taxon>
        <taxon>Artiodactyla</taxon>
        <taxon>Whippomorpha</taxon>
        <taxon>Cetacea</taxon>
        <taxon>Odontoceti</taxon>
        <taxon>Delphinidae</taxon>
        <taxon>Sagmatias</taxon>
    </lineage>
</organism>
<evidence type="ECO:0000250" key="1"/>
<evidence type="ECO:0000250" key="2">
    <source>
        <dbReference type="UniProtKB" id="P00157"/>
    </source>
</evidence>
<evidence type="ECO:0000255" key="3">
    <source>
        <dbReference type="PROSITE-ProRule" id="PRU00967"/>
    </source>
</evidence>
<evidence type="ECO:0000255" key="4">
    <source>
        <dbReference type="PROSITE-ProRule" id="PRU00968"/>
    </source>
</evidence>
<comment type="function">
    <text evidence="2">Component of the ubiquinol-cytochrome c reductase complex (complex III or cytochrome b-c1 complex) that is part of the mitochondrial respiratory chain. The b-c1 complex mediates electron transfer from ubiquinol to cytochrome c. Contributes to the generation of a proton gradient across the mitochondrial membrane that is then used for ATP synthesis.</text>
</comment>
<comment type="cofactor">
    <cofactor evidence="2">
        <name>heme b</name>
        <dbReference type="ChEBI" id="CHEBI:60344"/>
    </cofactor>
    <text evidence="2">Binds 2 heme b groups non-covalently.</text>
</comment>
<comment type="subunit">
    <text evidence="2">The cytochrome bc1 complex contains 11 subunits: 3 respiratory subunits (MT-CYB, CYC1 and UQCRFS1), 2 core proteins (UQCRC1 and UQCRC2) and 6 low-molecular weight proteins (UQCRH/QCR6, UQCRB/QCR7, UQCRQ/QCR8, UQCR10/QCR9, UQCR11/QCR10 and a cleavage product of UQCRFS1). This cytochrome bc1 complex then forms a dimer.</text>
</comment>
<comment type="subcellular location">
    <subcellularLocation>
        <location evidence="2">Mitochondrion inner membrane</location>
        <topology evidence="2">Multi-pass membrane protein</topology>
    </subcellularLocation>
</comment>
<comment type="miscellaneous">
    <text evidence="1">Heme 1 (or BL or b562) is low-potential and absorbs at about 562 nm, and heme 2 (or BH or b566) is high-potential and absorbs at about 566 nm.</text>
</comment>
<comment type="similarity">
    <text evidence="3 4">Belongs to the cytochrome b family.</text>
</comment>
<comment type="caution">
    <text evidence="2">The full-length protein contains only eight transmembrane helices, not nine as predicted by bioinformatics tools.</text>
</comment>
<proteinExistence type="inferred from homology"/>
<sequence length="379" mass="42836">MTNIRKTHPLMKILNDTFIDLPTPSNISSWWNFGSLLGLCLIMQILTGLFLAMHYTPDTSTAFSSVAHICRDVNYGWFIRYLHANGASMFFICLYAHIGRGLYYGSYMSQETWNIGVLLLLAVMATAFVGYVLPWGQMSFWGATVITNLLSAIPYIGTTLVEWIWGGFSVDKATLTRFFAFHFILPFIITALAAVHLLFLHETESNNPTGIPSNMDMIPFHPYYTIKDILGALFLILALLTLTLFTPDLLGDPDNYTPANPLSTPAHIKPEWYFLFAYAILRSIPNKLGGVLALLLSILILVFIPMLQTSKQRSMMFRPFSQLLFWTLIADLLTLTWIGGQPVEHPYIIVGQLASILYFFLILVLMPTVSLIENKLLKW</sequence>
<feature type="chain" id="PRO_0000061082" description="Cytochrome b">
    <location>
        <begin position="1"/>
        <end position="379"/>
    </location>
</feature>
<feature type="transmembrane region" description="Helical" evidence="2">
    <location>
        <begin position="33"/>
        <end position="53"/>
    </location>
</feature>
<feature type="transmembrane region" description="Helical" evidence="2">
    <location>
        <begin position="77"/>
        <end position="98"/>
    </location>
</feature>
<feature type="transmembrane region" description="Helical" evidence="2">
    <location>
        <begin position="113"/>
        <end position="133"/>
    </location>
</feature>
<feature type="transmembrane region" description="Helical" evidence="2">
    <location>
        <begin position="178"/>
        <end position="198"/>
    </location>
</feature>
<feature type="transmembrane region" description="Helical" evidence="2">
    <location>
        <begin position="226"/>
        <end position="246"/>
    </location>
</feature>
<feature type="transmembrane region" description="Helical" evidence="2">
    <location>
        <begin position="288"/>
        <end position="308"/>
    </location>
</feature>
<feature type="transmembrane region" description="Helical" evidence="2">
    <location>
        <begin position="320"/>
        <end position="340"/>
    </location>
</feature>
<feature type="transmembrane region" description="Helical" evidence="2">
    <location>
        <begin position="347"/>
        <end position="367"/>
    </location>
</feature>
<feature type="binding site" description="axial binding residue" evidence="2">
    <location>
        <position position="83"/>
    </location>
    <ligand>
        <name>heme b</name>
        <dbReference type="ChEBI" id="CHEBI:60344"/>
        <label>b562</label>
    </ligand>
    <ligandPart>
        <name>Fe</name>
        <dbReference type="ChEBI" id="CHEBI:18248"/>
    </ligandPart>
</feature>
<feature type="binding site" description="axial binding residue" evidence="2">
    <location>
        <position position="97"/>
    </location>
    <ligand>
        <name>heme b</name>
        <dbReference type="ChEBI" id="CHEBI:60344"/>
        <label>b566</label>
    </ligand>
    <ligandPart>
        <name>Fe</name>
        <dbReference type="ChEBI" id="CHEBI:18248"/>
    </ligandPart>
</feature>
<feature type="binding site" description="axial binding residue" evidence="2">
    <location>
        <position position="182"/>
    </location>
    <ligand>
        <name>heme b</name>
        <dbReference type="ChEBI" id="CHEBI:60344"/>
        <label>b562</label>
    </ligand>
    <ligandPart>
        <name>Fe</name>
        <dbReference type="ChEBI" id="CHEBI:18248"/>
    </ligandPart>
</feature>
<feature type="binding site" description="axial binding residue" evidence="2">
    <location>
        <position position="196"/>
    </location>
    <ligand>
        <name>heme b</name>
        <dbReference type="ChEBI" id="CHEBI:60344"/>
        <label>b566</label>
    </ligand>
    <ligandPart>
        <name>Fe</name>
        <dbReference type="ChEBI" id="CHEBI:18248"/>
    </ligandPart>
</feature>
<feature type="binding site" evidence="2">
    <location>
        <position position="201"/>
    </location>
    <ligand>
        <name>a ubiquinone</name>
        <dbReference type="ChEBI" id="CHEBI:16389"/>
    </ligand>
</feature>
<keyword id="KW-0249">Electron transport</keyword>
<keyword id="KW-0349">Heme</keyword>
<keyword id="KW-0408">Iron</keyword>
<keyword id="KW-0472">Membrane</keyword>
<keyword id="KW-0479">Metal-binding</keyword>
<keyword id="KW-0496">Mitochondrion</keyword>
<keyword id="KW-0999">Mitochondrion inner membrane</keyword>
<keyword id="KW-0679">Respiratory chain</keyword>
<keyword id="KW-0812">Transmembrane</keyword>
<keyword id="KW-1133">Transmembrane helix</keyword>
<keyword id="KW-0813">Transport</keyword>
<keyword id="KW-0830">Ubiquinone</keyword>